<protein>
    <recommendedName>
        <fullName>Nuclear autoantigen Sp-100</fullName>
    </recommendedName>
    <alternativeName>
        <fullName>Nuclear dot-associated Sp100 protein</fullName>
    </alternativeName>
    <alternativeName>
        <fullName>Speckled 100 kDa</fullName>
    </alternativeName>
</protein>
<dbReference type="EMBL" id="AF169947">
    <property type="protein sequence ID" value="AAF43109.1"/>
    <property type="molecule type" value="mRNA"/>
</dbReference>
<dbReference type="SMR" id="Q9N1Q6"/>
<dbReference type="STRING" id="9593.ENSGGOP00000007630"/>
<dbReference type="eggNOG" id="KOG0381">
    <property type="taxonomic scope" value="Eukaryota"/>
</dbReference>
<dbReference type="eggNOG" id="KOG2177">
    <property type="taxonomic scope" value="Eukaryota"/>
</dbReference>
<dbReference type="InParanoid" id="Q9N1Q6"/>
<dbReference type="Proteomes" id="UP000001519">
    <property type="component" value="Unplaced"/>
</dbReference>
<dbReference type="GO" id="GO:0005737">
    <property type="term" value="C:cytoplasm"/>
    <property type="evidence" value="ECO:0000250"/>
    <property type="project" value="UniProtKB"/>
</dbReference>
<dbReference type="GO" id="GO:0016605">
    <property type="term" value="C:PML body"/>
    <property type="evidence" value="ECO:0000250"/>
    <property type="project" value="UniProtKB"/>
</dbReference>
<dbReference type="GO" id="GO:0008301">
    <property type="term" value="F:DNA binding, bending"/>
    <property type="evidence" value="ECO:0000318"/>
    <property type="project" value="GO_Central"/>
</dbReference>
<dbReference type="GO" id="GO:0010596">
    <property type="term" value="P:negative regulation of endothelial cell migration"/>
    <property type="evidence" value="ECO:0000250"/>
    <property type="project" value="UniProtKB"/>
</dbReference>
<dbReference type="GO" id="GO:0046826">
    <property type="term" value="P:negative regulation of protein export from nucleus"/>
    <property type="evidence" value="ECO:0000250"/>
    <property type="project" value="UniProtKB"/>
</dbReference>
<dbReference type="GO" id="GO:0045765">
    <property type="term" value="P:regulation of angiogenesis"/>
    <property type="evidence" value="ECO:0000250"/>
    <property type="project" value="UniProtKB"/>
</dbReference>
<dbReference type="GO" id="GO:1902041">
    <property type="term" value="P:regulation of extrinsic apoptotic signaling pathway via death domain receptors"/>
    <property type="evidence" value="ECO:0000250"/>
    <property type="project" value="UniProtKB"/>
</dbReference>
<dbReference type="GO" id="GO:1902044">
    <property type="term" value="P:regulation of Fas signaling pathway"/>
    <property type="evidence" value="ECO:0000250"/>
    <property type="project" value="UniProtKB"/>
</dbReference>
<dbReference type="GO" id="GO:0006357">
    <property type="term" value="P:regulation of transcription by RNA polymerase II"/>
    <property type="evidence" value="ECO:0000318"/>
    <property type="project" value="GO_Central"/>
</dbReference>
<dbReference type="GO" id="GO:0000723">
    <property type="term" value="P:telomere maintenance"/>
    <property type="evidence" value="ECO:0000250"/>
    <property type="project" value="UniProtKB"/>
</dbReference>
<dbReference type="CDD" id="cd21978">
    <property type="entry name" value="HMG-box_HMGB_rpt1"/>
    <property type="match status" value="1"/>
</dbReference>
<dbReference type="CDD" id="cd21979">
    <property type="entry name" value="HMG-box_HMGB_rpt2"/>
    <property type="match status" value="1"/>
</dbReference>
<dbReference type="FunFam" id="1.10.30.10:FF:000015">
    <property type="entry name" value="high mobility group protein B1"/>
    <property type="match status" value="1"/>
</dbReference>
<dbReference type="FunFam" id="1.10.30.10:FF:000050">
    <property type="entry name" value="Nuclear autoantigen Sp-100"/>
    <property type="match status" value="1"/>
</dbReference>
<dbReference type="Gene3D" id="1.10.30.10">
    <property type="entry name" value="High mobility group box domain"/>
    <property type="match status" value="2"/>
</dbReference>
<dbReference type="Gene3D" id="3.10.390.10">
    <property type="entry name" value="SAND domain-like"/>
    <property type="match status" value="1"/>
</dbReference>
<dbReference type="InterPro" id="IPR009071">
    <property type="entry name" value="HMG_box_dom"/>
</dbReference>
<dbReference type="InterPro" id="IPR036910">
    <property type="entry name" value="HMG_box_dom_sf"/>
</dbReference>
<dbReference type="InterPro" id="IPR050342">
    <property type="entry name" value="HMGB"/>
</dbReference>
<dbReference type="InterPro" id="IPR010919">
    <property type="entry name" value="SAND-like_dom_sf"/>
</dbReference>
<dbReference type="InterPro" id="IPR000770">
    <property type="entry name" value="SAND_dom"/>
</dbReference>
<dbReference type="PANTHER" id="PTHR48112:SF18">
    <property type="match status" value="1"/>
</dbReference>
<dbReference type="PANTHER" id="PTHR48112">
    <property type="entry name" value="HIGH MOBILITY GROUP PROTEIN DSP1"/>
    <property type="match status" value="1"/>
</dbReference>
<dbReference type="Pfam" id="PF00505">
    <property type="entry name" value="HMG_box"/>
    <property type="match status" value="1"/>
</dbReference>
<dbReference type="Pfam" id="PF09011">
    <property type="entry name" value="HMG_box_2"/>
    <property type="match status" value="1"/>
</dbReference>
<dbReference type="Pfam" id="PF01342">
    <property type="entry name" value="SAND"/>
    <property type="match status" value="1"/>
</dbReference>
<dbReference type="PRINTS" id="PR00886">
    <property type="entry name" value="HIGHMOBLTY12"/>
</dbReference>
<dbReference type="SMART" id="SM00398">
    <property type="entry name" value="HMG"/>
    <property type="match status" value="2"/>
</dbReference>
<dbReference type="SUPFAM" id="SSF47095">
    <property type="entry name" value="HMG-box"/>
    <property type="match status" value="2"/>
</dbReference>
<dbReference type="SUPFAM" id="SSF63763">
    <property type="entry name" value="SAND domain-like"/>
    <property type="match status" value="1"/>
</dbReference>
<dbReference type="PROSITE" id="PS50118">
    <property type="entry name" value="HMG_BOX_2"/>
    <property type="match status" value="2"/>
</dbReference>
<dbReference type="PROSITE" id="PS50864">
    <property type="entry name" value="SAND"/>
    <property type="match status" value="1"/>
</dbReference>
<gene>
    <name type="primary">SP100</name>
</gene>
<organism>
    <name type="scientific">Gorilla gorilla gorilla</name>
    <name type="common">Western lowland gorilla</name>
    <dbReference type="NCBI Taxonomy" id="9595"/>
    <lineage>
        <taxon>Eukaryota</taxon>
        <taxon>Metazoa</taxon>
        <taxon>Chordata</taxon>
        <taxon>Craniata</taxon>
        <taxon>Vertebrata</taxon>
        <taxon>Euteleostomi</taxon>
        <taxon>Mammalia</taxon>
        <taxon>Eutheria</taxon>
        <taxon>Euarchontoglires</taxon>
        <taxon>Primates</taxon>
        <taxon>Haplorrhini</taxon>
        <taxon>Catarrhini</taxon>
        <taxon>Hominidae</taxon>
        <taxon>Gorilla</taxon>
    </lineage>
</organism>
<feature type="chain" id="PRO_0000074095" description="Nuclear autoantigen Sp-100">
    <location>
        <begin position="1" status="less than"/>
        <end position="225" status="greater than"/>
    </location>
</feature>
<feature type="domain" description="SAND" evidence="4">
    <location>
        <begin position="1" status="less than"/>
        <end position="25"/>
    </location>
</feature>
<feature type="DNA-binding region" description="HMG box 1" evidence="5">
    <location>
        <begin position="26"/>
        <end position="102"/>
    </location>
</feature>
<feature type="DNA-binding region" description="HMG box 2" evidence="5">
    <location>
        <begin position="118"/>
        <end position="186"/>
    </location>
</feature>
<feature type="region of interest" description="Disordered" evidence="6">
    <location>
        <begin position="185"/>
        <end position="225"/>
    </location>
</feature>
<feature type="coiled-coil region" evidence="3">
    <location>
        <begin position="157"/>
        <end position="224"/>
    </location>
</feature>
<feature type="short sequence motif" description="Nuclear localization signal" evidence="3">
    <location>
        <begin position="66"/>
        <end position="83"/>
    </location>
</feature>
<feature type="compositionally biased region" description="Basic residues" evidence="6">
    <location>
        <begin position="194"/>
        <end position="206"/>
    </location>
</feature>
<feature type="compositionally biased region" description="Acidic residues" evidence="6">
    <location>
        <begin position="210"/>
        <end position="225"/>
    </location>
</feature>
<feature type="non-terminal residue">
    <location>
        <position position="1"/>
    </location>
</feature>
<feature type="non-terminal residue">
    <location>
        <position position="225"/>
    </location>
</feature>
<comment type="function">
    <text evidence="2">Together with PML, this tumor suppressor is a major constituent of the PML bodies, a subnuclear organelle involved in a large number of physiological processes including cell growth, differentiation and apoptosis. Functions as a transcriptional coactivator of ETS1 and ETS2. Under certain conditions, it may also act as a corepressor of ETS1 preventing its binding to DNA. Through the regulation of ETS1 it may play a role in angiogenesis, controlling endothelial cell motility and invasion. Through interaction with the MRN complex it may be involved in the regulation of telomeres lengthening. May also regulate TP53-mediated transcription and through CASP8AP2, regulate FAS-mediated apoptosis. May also play a role in infection by viruses through mechanisms that may involve chromatin and/or transcriptional regulation (By similarity).</text>
</comment>
<comment type="subunit">
    <text evidence="2">Homodimer. Interacts with members of the HP1 family of nonhistone chromosomal protein, such as CBX5 and CBX3 via the PxVxL motif. Interacts with ETS1; the interaction is direct and modulates ETS1 transcriptional activity. Interacts with the MRN complex which is composed of two heterodimers RAD50/MRE11 associated with a single NBN; recruits the complex to PML-related bodies. Interacts with HIPK2; positively regulates TP53-dependent transcription. Interacts with CASP8AP2; may negatively regulate CASP8AP2 export from the nucleus to the cytoplasm (By similarity).</text>
</comment>
<comment type="subcellular location">
    <subcellularLocation>
        <location evidence="2">Nucleus</location>
    </subcellularLocation>
    <subcellularLocation>
        <location evidence="2">Nucleus</location>
        <location evidence="2">PML body</location>
    </subcellularLocation>
    <subcellularLocation>
        <location evidence="2">Nucleus</location>
        <location evidence="2">Nuclear body</location>
    </subcellularLocation>
    <subcellularLocation>
        <location evidence="2">Cytoplasm</location>
    </subcellularLocation>
    <text evidence="2">Accumulates in the cytoplasm upon FAS activation.</text>
</comment>
<comment type="PTM">
    <text evidence="1">Sumoylated. Sumoylated with SUMO1. Sumoylation depends on a functional nuclear localization signal but is not necessary for nuclear import or nuclear body targeting. Sumoylation may stabilize the interaction with CBX5 (By similarity).</text>
</comment>
<comment type="PTM">
    <text evidence="1">Phosphorylated.</text>
</comment>
<accession>Q9N1Q6</accession>
<keyword id="KW-0175">Coiled coil</keyword>
<keyword id="KW-0963">Cytoplasm</keyword>
<keyword id="KW-0238">DNA-binding</keyword>
<keyword id="KW-0539">Nucleus</keyword>
<keyword id="KW-0597">Phosphoprotein</keyword>
<keyword id="KW-1185">Reference proteome</keyword>
<keyword id="KW-0677">Repeat</keyword>
<keyword id="KW-0804">Transcription</keyword>
<keyword id="KW-0805">Transcription regulation</keyword>
<keyword id="KW-0832">Ubl conjugation</keyword>
<proteinExistence type="evidence at transcript level"/>
<sequence>SKNWKLSIRCGGYTLKVLMENKLLPEPPSTRKKRILESHNNTLVDPCEEHKKKNPDASVKFSEFLKKCSEMWKTIFAKEKGKFEDMAKADKAHYEREMKTYIPPKGEKKKKFKDPNAPKRPPLAFFLFCSEYRPKIKGEHPGLSIDDVVKKLAGMWNNTAAADKQFYEKKAAKLKEKYKKDIAAYRAKGMPNSAKKRAVKAEKSKKKREEEEDEEDEQEEENEEE</sequence>
<name>SP100_GORGO</name>
<evidence type="ECO:0000250" key="1"/>
<evidence type="ECO:0000250" key="2">
    <source>
        <dbReference type="UniProtKB" id="P23497"/>
    </source>
</evidence>
<evidence type="ECO:0000255" key="3"/>
<evidence type="ECO:0000255" key="4">
    <source>
        <dbReference type="PROSITE-ProRule" id="PRU00185"/>
    </source>
</evidence>
<evidence type="ECO:0000255" key="5">
    <source>
        <dbReference type="PROSITE-ProRule" id="PRU00267"/>
    </source>
</evidence>
<evidence type="ECO:0000256" key="6">
    <source>
        <dbReference type="SAM" id="MobiDB-lite"/>
    </source>
</evidence>
<reference key="1">
    <citation type="journal article" date="2000" name="Genomics">
        <title>Back to the roots of a new exon-the molecular archaeology of a SP100 splice variant.</title>
        <authorList>
            <person name="Rogalla P."/>
            <person name="Kazmierczak B."/>
            <person name="Flohr A.M."/>
            <person name="Hauke S."/>
            <person name="Bullerdiek J."/>
        </authorList>
    </citation>
    <scope>NUCLEOTIDE SEQUENCE [MRNA]</scope>
    <source>
        <tissue>Fibroblast</tissue>
    </source>
</reference>